<accession>C4LJM9</accession>
<organism>
    <name type="scientific">Corynebacterium kroppenstedtii (strain DSM 44385 / JCM 11950 / CIP 105744 / CCUG 35717)</name>
    <dbReference type="NCBI Taxonomy" id="645127"/>
    <lineage>
        <taxon>Bacteria</taxon>
        <taxon>Bacillati</taxon>
        <taxon>Actinomycetota</taxon>
        <taxon>Actinomycetes</taxon>
        <taxon>Mycobacteriales</taxon>
        <taxon>Corynebacteriaceae</taxon>
        <taxon>Corynebacterium</taxon>
    </lineage>
</organism>
<feature type="chain" id="PRO_1000205732" description="Homoserine kinase">
    <location>
        <begin position="1"/>
        <end position="310"/>
    </location>
</feature>
<feature type="binding site" evidence="1">
    <location>
        <begin position="95"/>
        <end position="105"/>
    </location>
    <ligand>
        <name>ATP</name>
        <dbReference type="ChEBI" id="CHEBI:30616"/>
    </ligand>
</feature>
<proteinExistence type="inferred from homology"/>
<evidence type="ECO:0000255" key="1">
    <source>
        <dbReference type="HAMAP-Rule" id="MF_00384"/>
    </source>
</evidence>
<dbReference type="EC" id="2.7.1.39" evidence="1"/>
<dbReference type="EMBL" id="CP001620">
    <property type="protein sequence ID" value="ACR18034.1"/>
    <property type="molecule type" value="Genomic_DNA"/>
</dbReference>
<dbReference type="RefSeq" id="WP_012731921.1">
    <property type="nucleotide sequence ID" value="NC_012704.1"/>
</dbReference>
<dbReference type="SMR" id="C4LJM9"/>
<dbReference type="STRING" id="645127.ckrop_1289"/>
<dbReference type="KEGG" id="ckp:ckrop_1289"/>
<dbReference type="eggNOG" id="COG0083">
    <property type="taxonomic scope" value="Bacteria"/>
</dbReference>
<dbReference type="HOGENOM" id="CLU_041243_0_1_11"/>
<dbReference type="OrthoDB" id="9769912at2"/>
<dbReference type="UniPathway" id="UPA00050">
    <property type="reaction ID" value="UER00064"/>
</dbReference>
<dbReference type="Proteomes" id="UP000001473">
    <property type="component" value="Chromosome"/>
</dbReference>
<dbReference type="GO" id="GO:0005737">
    <property type="term" value="C:cytoplasm"/>
    <property type="evidence" value="ECO:0007669"/>
    <property type="project" value="UniProtKB-SubCell"/>
</dbReference>
<dbReference type="GO" id="GO:0005524">
    <property type="term" value="F:ATP binding"/>
    <property type="evidence" value="ECO:0007669"/>
    <property type="project" value="UniProtKB-UniRule"/>
</dbReference>
<dbReference type="GO" id="GO:0004413">
    <property type="term" value="F:homoserine kinase activity"/>
    <property type="evidence" value="ECO:0007669"/>
    <property type="project" value="UniProtKB-UniRule"/>
</dbReference>
<dbReference type="GO" id="GO:0009088">
    <property type="term" value="P:threonine biosynthetic process"/>
    <property type="evidence" value="ECO:0007669"/>
    <property type="project" value="UniProtKB-UniRule"/>
</dbReference>
<dbReference type="Gene3D" id="3.30.230.10">
    <property type="match status" value="1"/>
</dbReference>
<dbReference type="Gene3D" id="3.30.70.890">
    <property type="entry name" value="GHMP kinase, C-terminal domain"/>
    <property type="match status" value="1"/>
</dbReference>
<dbReference type="HAMAP" id="MF_00384">
    <property type="entry name" value="Homoser_kinase"/>
    <property type="match status" value="1"/>
</dbReference>
<dbReference type="InterPro" id="IPR013750">
    <property type="entry name" value="GHMP_kinase_C_dom"/>
</dbReference>
<dbReference type="InterPro" id="IPR036554">
    <property type="entry name" value="GHMP_kinase_C_sf"/>
</dbReference>
<dbReference type="InterPro" id="IPR006204">
    <property type="entry name" value="GHMP_kinase_N_dom"/>
</dbReference>
<dbReference type="InterPro" id="IPR006203">
    <property type="entry name" value="GHMP_knse_ATP-bd_CS"/>
</dbReference>
<dbReference type="InterPro" id="IPR000870">
    <property type="entry name" value="Homoserine_kinase"/>
</dbReference>
<dbReference type="InterPro" id="IPR020568">
    <property type="entry name" value="Ribosomal_Su5_D2-typ_SF"/>
</dbReference>
<dbReference type="InterPro" id="IPR014721">
    <property type="entry name" value="Ribsml_uS5_D2-typ_fold_subgr"/>
</dbReference>
<dbReference type="NCBIfam" id="TIGR00191">
    <property type="entry name" value="thrB"/>
    <property type="match status" value="1"/>
</dbReference>
<dbReference type="PANTHER" id="PTHR20861:SF1">
    <property type="entry name" value="HOMOSERINE KINASE"/>
    <property type="match status" value="1"/>
</dbReference>
<dbReference type="PANTHER" id="PTHR20861">
    <property type="entry name" value="HOMOSERINE/4-DIPHOSPHOCYTIDYL-2-C-METHYL-D-ERYTHRITOL KINASE"/>
    <property type="match status" value="1"/>
</dbReference>
<dbReference type="Pfam" id="PF08544">
    <property type="entry name" value="GHMP_kinases_C"/>
    <property type="match status" value="1"/>
</dbReference>
<dbReference type="Pfam" id="PF00288">
    <property type="entry name" value="GHMP_kinases_N"/>
    <property type="match status" value="1"/>
</dbReference>
<dbReference type="PIRSF" id="PIRSF000676">
    <property type="entry name" value="Homoser_kin"/>
    <property type="match status" value="1"/>
</dbReference>
<dbReference type="PRINTS" id="PR00958">
    <property type="entry name" value="HOMSERKINASE"/>
</dbReference>
<dbReference type="SUPFAM" id="SSF55060">
    <property type="entry name" value="GHMP Kinase, C-terminal domain"/>
    <property type="match status" value="1"/>
</dbReference>
<dbReference type="SUPFAM" id="SSF54211">
    <property type="entry name" value="Ribosomal protein S5 domain 2-like"/>
    <property type="match status" value="1"/>
</dbReference>
<dbReference type="PROSITE" id="PS00627">
    <property type="entry name" value="GHMP_KINASES_ATP"/>
    <property type="match status" value="1"/>
</dbReference>
<keyword id="KW-0028">Amino-acid biosynthesis</keyword>
<keyword id="KW-0067">ATP-binding</keyword>
<keyword id="KW-0963">Cytoplasm</keyword>
<keyword id="KW-0418">Kinase</keyword>
<keyword id="KW-0547">Nucleotide-binding</keyword>
<keyword id="KW-1185">Reference proteome</keyword>
<keyword id="KW-0791">Threonine biosynthesis</keyword>
<keyword id="KW-0808">Transferase</keyword>
<comment type="function">
    <text evidence="1">Catalyzes the ATP-dependent phosphorylation of L-homoserine to L-homoserine phosphate.</text>
</comment>
<comment type="catalytic activity">
    <reaction evidence="1">
        <text>L-homoserine + ATP = O-phospho-L-homoserine + ADP + H(+)</text>
        <dbReference type="Rhea" id="RHEA:13985"/>
        <dbReference type="ChEBI" id="CHEBI:15378"/>
        <dbReference type="ChEBI" id="CHEBI:30616"/>
        <dbReference type="ChEBI" id="CHEBI:57476"/>
        <dbReference type="ChEBI" id="CHEBI:57590"/>
        <dbReference type="ChEBI" id="CHEBI:456216"/>
        <dbReference type="EC" id="2.7.1.39"/>
    </reaction>
</comment>
<comment type="pathway">
    <text evidence="1">Amino-acid biosynthesis; L-threonine biosynthesis; L-threonine from L-aspartate: step 4/5.</text>
</comment>
<comment type="subcellular location">
    <subcellularLocation>
        <location evidence="1">Cytoplasm</location>
    </subcellularLocation>
</comment>
<comment type="similarity">
    <text evidence="1">Belongs to the GHMP kinase family. Homoserine kinase subfamily.</text>
</comment>
<reference key="1">
    <citation type="journal article" date="2008" name="J. Biotechnol.">
        <title>Ultrafast pyrosequencing of Corynebacterium kroppenstedtii DSM44385 revealed insights into the physiology of a lipophilic corynebacterium that lacks mycolic acids.</title>
        <authorList>
            <person name="Tauch A."/>
            <person name="Schneider J."/>
            <person name="Szczepanowski R."/>
            <person name="Tilker A."/>
            <person name="Viehoever P."/>
            <person name="Gartemann K.-H."/>
            <person name="Arnold W."/>
            <person name="Blom J."/>
            <person name="Brinkrolf K."/>
            <person name="Brune I."/>
            <person name="Goetker S."/>
            <person name="Weisshaar B."/>
            <person name="Goesmann A."/>
            <person name="Droege M."/>
            <person name="Puehler A."/>
        </authorList>
    </citation>
    <scope>NUCLEOTIDE SEQUENCE [LARGE SCALE GENOMIC DNA]</scope>
    <source>
        <strain>DSM 44385 / JCM 11950 / CIP 105744 / CCUG 35717</strain>
    </source>
</reference>
<gene>
    <name evidence="1" type="primary">thrB</name>
    <name type="ordered locus">ckrop_1289</name>
</gene>
<name>KHSE_CORK4</name>
<sequence length="310" mass="32200">MPHDIPVGRSVTVRVPASSANLGPGFDTLGLAVGLYDIVTVEVTASGLTVDVQGEGAGEVPLDGTHLVVRAIREGLRVAHADVPGLAVSCENAIPQSRGLGSSAAAAAAGVCAANALADNALTTDQVIQVVSSFEGHPDNAAASVLGGAVVSWTDTPVDGETAPQYHAIGVDVHPDIRATAFIPDFTASTNAVRRVLPSDVSHVDARFNVSRTAVMTVALRTNPELLWEGTRDRLHQPYRADALSVSAEWVNRLRNRGYAAYLSGAGPTIMVLSTEDLPAEIVDTASSEGLRVITLPIAGPIQVNRKELG</sequence>
<protein>
    <recommendedName>
        <fullName evidence="1">Homoserine kinase</fullName>
        <shortName evidence="1">HK</shortName>
        <shortName evidence="1">HSK</shortName>
        <ecNumber evidence="1">2.7.1.39</ecNumber>
    </recommendedName>
</protein>